<keyword id="KW-0150">Chloroplast</keyword>
<keyword id="KW-0507">mRNA processing</keyword>
<keyword id="KW-0934">Plastid</keyword>
<keyword id="KW-0694">RNA-binding</keyword>
<keyword id="KW-0819">tRNA processing</keyword>
<reference key="1">
    <citation type="journal article" date="2000" name="Am. J. Bot.">
        <title>Phylogenetic systematics of the tribe Millettieae (Leguminosae) based on chloroplast trnK/matK sequences and its implications for evolutionary patterns in Papilionoideae.</title>
        <authorList>
            <person name="Hu J.-M."/>
            <person name="Lavin M."/>
            <person name="Wojciechowski M.F."/>
            <person name="Sanderson M.J."/>
        </authorList>
    </citation>
    <scope>NUCLEOTIDE SEQUENCE [GENOMIC DNA]</scope>
</reference>
<evidence type="ECO:0000255" key="1">
    <source>
        <dbReference type="HAMAP-Rule" id="MF_01390"/>
    </source>
</evidence>
<protein>
    <recommendedName>
        <fullName evidence="1">Maturase K</fullName>
    </recommendedName>
    <alternativeName>
        <fullName evidence="1">Intron maturase</fullName>
    </alternativeName>
</protein>
<gene>
    <name evidence="1" type="primary">matK</name>
</gene>
<proteinExistence type="inferred from homology"/>
<feature type="chain" id="PRO_0000143681" description="Maturase K">
    <location>
        <begin position="1"/>
        <end position="507"/>
    </location>
</feature>
<comment type="function">
    <text evidence="1">Usually encoded in the trnK tRNA gene intron. Probably assists in splicing its own and other chloroplast group II introns.</text>
</comment>
<comment type="subcellular location">
    <subcellularLocation>
        <location>Plastid</location>
        <location>Chloroplast</location>
    </subcellularLocation>
</comment>
<comment type="similarity">
    <text evidence="1">Belongs to the intron maturase 2 family. MatK subfamily.</text>
</comment>
<dbReference type="EMBL" id="AF142728">
    <property type="protein sequence ID" value="AAD52899.1"/>
    <property type="molecule type" value="Genomic_DNA"/>
</dbReference>
<dbReference type="GO" id="GO:0009507">
    <property type="term" value="C:chloroplast"/>
    <property type="evidence" value="ECO:0007669"/>
    <property type="project" value="UniProtKB-SubCell"/>
</dbReference>
<dbReference type="GO" id="GO:0003723">
    <property type="term" value="F:RNA binding"/>
    <property type="evidence" value="ECO:0007669"/>
    <property type="project" value="UniProtKB-KW"/>
</dbReference>
<dbReference type="GO" id="GO:0006397">
    <property type="term" value="P:mRNA processing"/>
    <property type="evidence" value="ECO:0007669"/>
    <property type="project" value="UniProtKB-KW"/>
</dbReference>
<dbReference type="GO" id="GO:0008380">
    <property type="term" value="P:RNA splicing"/>
    <property type="evidence" value="ECO:0007669"/>
    <property type="project" value="UniProtKB-UniRule"/>
</dbReference>
<dbReference type="GO" id="GO:0008033">
    <property type="term" value="P:tRNA processing"/>
    <property type="evidence" value="ECO:0007669"/>
    <property type="project" value="UniProtKB-KW"/>
</dbReference>
<dbReference type="HAMAP" id="MF_01390">
    <property type="entry name" value="MatK"/>
    <property type="match status" value="1"/>
</dbReference>
<dbReference type="InterPro" id="IPR024937">
    <property type="entry name" value="Domain_X"/>
</dbReference>
<dbReference type="InterPro" id="IPR002866">
    <property type="entry name" value="Maturase_MatK"/>
</dbReference>
<dbReference type="InterPro" id="IPR024942">
    <property type="entry name" value="Maturase_MatK_N"/>
</dbReference>
<dbReference type="PANTHER" id="PTHR34811">
    <property type="entry name" value="MATURASE K"/>
    <property type="match status" value="1"/>
</dbReference>
<dbReference type="PANTHER" id="PTHR34811:SF1">
    <property type="entry name" value="MATURASE K"/>
    <property type="match status" value="1"/>
</dbReference>
<dbReference type="Pfam" id="PF01348">
    <property type="entry name" value="Intron_maturas2"/>
    <property type="match status" value="1"/>
</dbReference>
<dbReference type="Pfam" id="PF01824">
    <property type="entry name" value="MatK_N"/>
    <property type="match status" value="1"/>
</dbReference>
<accession>Q9TKP9</accession>
<geneLocation type="chloroplast"/>
<sequence>MEEHQVYLELDRSRQQDFLYPLVFREYIYGLAYGHDLNRSIFAENVGYDNKSSLLIVKRLITRMYQQNHLIISANDSKKNTFLRYNNNIYSQIISEGFAVVVEIPFSLQLSSSLEEAEILKSYNNLQSIHSIFPFFEDKFTYLNYLSDIRIPYPIHLEILVQILRYWVKDVPFFHLLRLFLYDYCNSNSLITPKKWISTFSKSNPRFFFFLYNFYVCEYESIFYFLRNKSSHLRLKSFSVFFERIFFYAKRKHLVEVVAKDFLSTLTFFKDPFIHYVRYQGKSILASKNAPLLMNKWKYYFIHLWQCHFDLWAQPGTIHINLLSEHSFHFLGYFLNVRLNRSVVRSQMLQNAFLIEMVIKKLDIIVPIIPLIRSLAKANFCNGLGNPISKPVWADSSDFDIIDRFLRICRNLSHYYNGSSKKKSLYRIKYILRLSCIKTLACKHKSTVRAFLKRLGSEKLLEEFFIEEQEIVSLIFPRASXTLQRLHRNRIWYLDILFFSNDLVNHE</sequence>
<organism>
    <name type="scientific">Robinia pseudoacacia</name>
    <name type="common">Black locust</name>
    <dbReference type="NCBI Taxonomy" id="35938"/>
    <lineage>
        <taxon>Eukaryota</taxon>
        <taxon>Viridiplantae</taxon>
        <taxon>Streptophyta</taxon>
        <taxon>Embryophyta</taxon>
        <taxon>Tracheophyta</taxon>
        <taxon>Spermatophyta</taxon>
        <taxon>Magnoliopsida</taxon>
        <taxon>eudicotyledons</taxon>
        <taxon>Gunneridae</taxon>
        <taxon>Pentapetalae</taxon>
        <taxon>rosids</taxon>
        <taxon>fabids</taxon>
        <taxon>Fabales</taxon>
        <taxon>Fabaceae</taxon>
        <taxon>Papilionoideae</taxon>
        <taxon>50 kb inversion clade</taxon>
        <taxon>NPAAA clade</taxon>
        <taxon>Hologalegina</taxon>
        <taxon>robinioid clade</taxon>
        <taxon>Robinieae</taxon>
        <taxon>Robinia</taxon>
    </lineage>
</organism>
<name>MATK_ROBPS</name>